<proteinExistence type="inferred from homology"/>
<organism>
    <name type="scientific">Thermosipho africanus (strain TCF52B)</name>
    <dbReference type="NCBI Taxonomy" id="484019"/>
    <lineage>
        <taxon>Bacteria</taxon>
        <taxon>Thermotogati</taxon>
        <taxon>Thermotogota</taxon>
        <taxon>Thermotogae</taxon>
        <taxon>Thermotogales</taxon>
        <taxon>Fervidobacteriaceae</taxon>
        <taxon>Thermosipho</taxon>
    </lineage>
</organism>
<protein>
    <recommendedName>
        <fullName evidence="1">CTP synthase</fullName>
        <ecNumber evidence="1">6.3.4.2</ecNumber>
    </recommendedName>
    <alternativeName>
        <fullName evidence="1">Cytidine 5'-triphosphate synthase</fullName>
    </alternativeName>
    <alternativeName>
        <fullName evidence="1">Cytidine triphosphate synthetase</fullName>
        <shortName evidence="1">CTP synthetase</shortName>
        <shortName evidence="1">CTPS</shortName>
    </alternativeName>
    <alternativeName>
        <fullName evidence="1">UTP--ammonia ligase</fullName>
    </alternativeName>
</protein>
<sequence length="526" mass="59145">MPQRFIVVTGGVLSGIGKGIFSASLARILKDSGVNVNILKIDPYLNVDAGTMNPNQHGEVFVTDDGYEADLDLGHYERFLGINVSRKNNITAGQIYYSVIKREREGKYLGSTVQIVPHVTSEIKDRIKTMDGDLLVIEIGGTVGDIEGEVFLEAVRELAFEIGREKFHFVHVTYVPYLRTTNEFKTKPTQQSVQLLRRIGIHPDTIIVRTEMPIDANSLFKVSLFSGVPRNRVINLPDASNVYEVPDVLHSLNLHKLIAKELDIDINDRFNWSYPKSFELLKIGIVGKYLGTDDAYKSIIESIYLSGAQKPIVIDAQELEDMTDEQIKNYLDDFDALIIPGGFGRRGIEGKIKAIKYARENKKPILGICLGMQLMAIEFARNVGKLEGANSTEFDENTPYPVVNMMESQKEVLNLGGTMRLGAQKTQIMKGTLLSRIYDGQEVVYERHRHRYEVDAEAFPQLFKNPGEEGYKLTISARSDFVEAVELDDHPFFVGIQYHPEYKSKVGKPHPIFKWLVKAAGGKIND</sequence>
<evidence type="ECO:0000255" key="1">
    <source>
        <dbReference type="HAMAP-Rule" id="MF_01227"/>
    </source>
</evidence>
<name>PYRG_THEAB</name>
<dbReference type="EC" id="6.3.4.2" evidence="1"/>
<dbReference type="EMBL" id="CP001185">
    <property type="protein sequence ID" value="ACJ75452.1"/>
    <property type="molecule type" value="Genomic_DNA"/>
</dbReference>
<dbReference type="RefSeq" id="WP_012579918.1">
    <property type="nucleotide sequence ID" value="NC_011653.1"/>
</dbReference>
<dbReference type="SMR" id="B7IH88"/>
<dbReference type="STRING" id="484019.THA_993"/>
<dbReference type="MEROPS" id="C26.964"/>
<dbReference type="KEGG" id="taf:THA_993"/>
<dbReference type="eggNOG" id="COG0504">
    <property type="taxonomic scope" value="Bacteria"/>
</dbReference>
<dbReference type="HOGENOM" id="CLU_011675_5_0_0"/>
<dbReference type="OrthoDB" id="9801107at2"/>
<dbReference type="UniPathway" id="UPA00159">
    <property type="reaction ID" value="UER00277"/>
</dbReference>
<dbReference type="Proteomes" id="UP000002453">
    <property type="component" value="Chromosome"/>
</dbReference>
<dbReference type="GO" id="GO:0005829">
    <property type="term" value="C:cytosol"/>
    <property type="evidence" value="ECO:0007669"/>
    <property type="project" value="TreeGrafter"/>
</dbReference>
<dbReference type="GO" id="GO:0005524">
    <property type="term" value="F:ATP binding"/>
    <property type="evidence" value="ECO:0007669"/>
    <property type="project" value="UniProtKB-KW"/>
</dbReference>
<dbReference type="GO" id="GO:0003883">
    <property type="term" value="F:CTP synthase activity"/>
    <property type="evidence" value="ECO:0007669"/>
    <property type="project" value="UniProtKB-UniRule"/>
</dbReference>
<dbReference type="GO" id="GO:0004359">
    <property type="term" value="F:glutaminase activity"/>
    <property type="evidence" value="ECO:0007669"/>
    <property type="project" value="RHEA"/>
</dbReference>
<dbReference type="GO" id="GO:0042802">
    <property type="term" value="F:identical protein binding"/>
    <property type="evidence" value="ECO:0007669"/>
    <property type="project" value="TreeGrafter"/>
</dbReference>
<dbReference type="GO" id="GO:0046872">
    <property type="term" value="F:metal ion binding"/>
    <property type="evidence" value="ECO:0007669"/>
    <property type="project" value="UniProtKB-KW"/>
</dbReference>
<dbReference type="GO" id="GO:0044210">
    <property type="term" value="P:'de novo' CTP biosynthetic process"/>
    <property type="evidence" value="ECO:0007669"/>
    <property type="project" value="UniProtKB-UniRule"/>
</dbReference>
<dbReference type="GO" id="GO:0019856">
    <property type="term" value="P:pyrimidine nucleobase biosynthetic process"/>
    <property type="evidence" value="ECO:0007669"/>
    <property type="project" value="TreeGrafter"/>
</dbReference>
<dbReference type="CDD" id="cd03113">
    <property type="entry name" value="CTPS_N"/>
    <property type="match status" value="1"/>
</dbReference>
<dbReference type="CDD" id="cd01746">
    <property type="entry name" value="GATase1_CTP_Synthase"/>
    <property type="match status" value="1"/>
</dbReference>
<dbReference type="FunFam" id="3.40.50.300:FF:000009">
    <property type="entry name" value="CTP synthase"/>
    <property type="match status" value="1"/>
</dbReference>
<dbReference type="FunFam" id="3.40.50.880:FF:000002">
    <property type="entry name" value="CTP synthase"/>
    <property type="match status" value="1"/>
</dbReference>
<dbReference type="Gene3D" id="3.40.50.880">
    <property type="match status" value="1"/>
</dbReference>
<dbReference type="Gene3D" id="3.40.50.300">
    <property type="entry name" value="P-loop containing nucleotide triphosphate hydrolases"/>
    <property type="match status" value="1"/>
</dbReference>
<dbReference type="HAMAP" id="MF_01227">
    <property type="entry name" value="PyrG"/>
    <property type="match status" value="1"/>
</dbReference>
<dbReference type="InterPro" id="IPR029062">
    <property type="entry name" value="Class_I_gatase-like"/>
</dbReference>
<dbReference type="InterPro" id="IPR004468">
    <property type="entry name" value="CTP_synthase"/>
</dbReference>
<dbReference type="InterPro" id="IPR017456">
    <property type="entry name" value="CTP_synthase_N"/>
</dbReference>
<dbReference type="InterPro" id="IPR017926">
    <property type="entry name" value="GATASE"/>
</dbReference>
<dbReference type="InterPro" id="IPR033828">
    <property type="entry name" value="GATase1_CTP_Synthase"/>
</dbReference>
<dbReference type="InterPro" id="IPR027417">
    <property type="entry name" value="P-loop_NTPase"/>
</dbReference>
<dbReference type="NCBIfam" id="NF003792">
    <property type="entry name" value="PRK05380.1"/>
    <property type="match status" value="1"/>
</dbReference>
<dbReference type="NCBIfam" id="TIGR00337">
    <property type="entry name" value="PyrG"/>
    <property type="match status" value="1"/>
</dbReference>
<dbReference type="PANTHER" id="PTHR11550">
    <property type="entry name" value="CTP SYNTHASE"/>
    <property type="match status" value="1"/>
</dbReference>
<dbReference type="PANTHER" id="PTHR11550:SF0">
    <property type="entry name" value="CTP SYNTHASE-RELATED"/>
    <property type="match status" value="1"/>
</dbReference>
<dbReference type="Pfam" id="PF06418">
    <property type="entry name" value="CTP_synth_N"/>
    <property type="match status" value="1"/>
</dbReference>
<dbReference type="Pfam" id="PF00117">
    <property type="entry name" value="GATase"/>
    <property type="match status" value="1"/>
</dbReference>
<dbReference type="SUPFAM" id="SSF52317">
    <property type="entry name" value="Class I glutamine amidotransferase-like"/>
    <property type="match status" value="1"/>
</dbReference>
<dbReference type="SUPFAM" id="SSF52540">
    <property type="entry name" value="P-loop containing nucleoside triphosphate hydrolases"/>
    <property type="match status" value="1"/>
</dbReference>
<dbReference type="PROSITE" id="PS51273">
    <property type="entry name" value="GATASE_TYPE_1"/>
    <property type="match status" value="1"/>
</dbReference>
<feature type="chain" id="PRO_1000164962" description="CTP synthase">
    <location>
        <begin position="1"/>
        <end position="526"/>
    </location>
</feature>
<feature type="domain" description="Glutamine amidotransferase type-1" evidence="1">
    <location>
        <begin position="282"/>
        <end position="526"/>
    </location>
</feature>
<feature type="region of interest" description="Amidoligase domain" evidence="1">
    <location>
        <begin position="1"/>
        <end position="264"/>
    </location>
</feature>
<feature type="active site" description="Nucleophile; for glutamine hydrolysis" evidence="1">
    <location>
        <position position="369"/>
    </location>
</feature>
<feature type="active site" evidence="1">
    <location>
        <position position="499"/>
    </location>
</feature>
<feature type="active site" evidence="1">
    <location>
        <position position="501"/>
    </location>
</feature>
<feature type="binding site" evidence="1">
    <location>
        <position position="14"/>
    </location>
    <ligand>
        <name>CTP</name>
        <dbReference type="ChEBI" id="CHEBI:37563"/>
        <note>allosteric inhibitor</note>
    </ligand>
</feature>
<feature type="binding site" evidence="1">
    <location>
        <position position="14"/>
    </location>
    <ligand>
        <name>UTP</name>
        <dbReference type="ChEBI" id="CHEBI:46398"/>
    </ligand>
</feature>
<feature type="binding site" evidence="1">
    <location>
        <begin position="15"/>
        <end position="20"/>
    </location>
    <ligand>
        <name>ATP</name>
        <dbReference type="ChEBI" id="CHEBI:30616"/>
    </ligand>
</feature>
<feature type="binding site" evidence="1">
    <location>
        <position position="72"/>
    </location>
    <ligand>
        <name>ATP</name>
        <dbReference type="ChEBI" id="CHEBI:30616"/>
    </ligand>
</feature>
<feature type="binding site" evidence="1">
    <location>
        <position position="72"/>
    </location>
    <ligand>
        <name>Mg(2+)</name>
        <dbReference type="ChEBI" id="CHEBI:18420"/>
    </ligand>
</feature>
<feature type="binding site" evidence="1">
    <location>
        <position position="138"/>
    </location>
    <ligand>
        <name>Mg(2+)</name>
        <dbReference type="ChEBI" id="CHEBI:18420"/>
    </ligand>
</feature>
<feature type="binding site" evidence="1">
    <location>
        <begin position="145"/>
        <end position="147"/>
    </location>
    <ligand>
        <name>CTP</name>
        <dbReference type="ChEBI" id="CHEBI:37563"/>
        <note>allosteric inhibitor</note>
    </ligand>
</feature>
<feature type="binding site" evidence="1">
    <location>
        <begin position="185"/>
        <end position="190"/>
    </location>
    <ligand>
        <name>CTP</name>
        <dbReference type="ChEBI" id="CHEBI:37563"/>
        <note>allosteric inhibitor</note>
    </ligand>
</feature>
<feature type="binding site" evidence="1">
    <location>
        <begin position="185"/>
        <end position="190"/>
    </location>
    <ligand>
        <name>UTP</name>
        <dbReference type="ChEBI" id="CHEBI:46398"/>
    </ligand>
</feature>
<feature type="binding site" evidence="1">
    <location>
        <position position="221"/>
    </location>
    <ligand>
        <name>CTP</name>
        <dbReference type="ChEBI" id="CHEBI:37563"/>
        <note>allosteric inhibitor</note>
    </ligand>
</feature>
<feature type="binding site" evidence="1">
    <location>
        <position position="221"/>
    </location>
    <ligand>
        <name>UTP</name>
        <dbReference type="ChEBI" id="CHEBI:46398"/>
    </ligand>
</feature>
<feature type="binding site" evidence="1">
    <location>
        <position position="342"/>
    </location>
    <ligand>
        <name>L-glutamine</name>
        <dbReference type="ChEBI" id="CHEBI:58359"/>
    </ligand>
</feature>
<feature type="binding site" evidence="1">
    <location>
        <begin position="370"/>
        <end position="373"/>
    </location>
    <ligand>
        <name>L-glutamine</name>
        <dbReference type="ChEBI" id="CHEBI:58359"/>
    </ligand>
</feature>
<feature type="binding site" evidence="1">
    <location>
        <position position="393"/>
    </location>
    <ligand>
        <name>L-glutamine</name>
        <dbReference type="ChEBI" id="CHEBI:58359"/>
    </ligand>
</feature>
<feature type="binding site" evidence="1">
    <location>
        <position position="451"/>
    </location>
    <ligand>
        <name>L-glutamine</name>
        <dbReference type="ChEBI" id="CHEBI:58359"/>
    </ligand>
</feature>
<comment type="function">
    <text evidence="1">Catalyzes the ATP-dependent amination of UTP to CTP with either L-glutamine or ammonia as the source of nitrogen. Regulates intracellular CTP levels through interactions with the four ribonucleotide triphosphates.</text>
</comment>
<comment type="catalytic activity">
    <reaction evidence="1">
        <text>UTP + L-glutamine + ATP + H2O = CTP + L-glutamate + ADP + phosphate + 2 H(+)</text>
        <dbReference type="Rhea" id="RHEA:26426"/>
        <dbReference type="ChEBI" id="CHEBI:15377"/>
        <dbReference type="ChEBI" id="CHEBI:15378"/>
        <dbReference type="ChEBI" id="CHEBI:29985"/>
        <dbReference type="ChEBI" id="CHEBI:30616"/>
        <dbReference type="ChEBI" id="CHEBI:37563"/>
        <dbReference type="ChEBI" id="CHEBI:43474"/>
        <dbReference type="ChEBI" id="CHEBI:46398"/>
        <dbReference type="ChEBI" id="CHEBI:58359"/>
        <dbReference type="ChEBI" id="CHEBI:456216"/>
        <dbReference type="EC" id="6.3.4.2"/>
    </reaction>
</comment>
<comment type="catalytic activity">
    <reaction evidence="1">
        <text>L-glutamine + H2O = L-glutamate + NH4(+)</text>
        <dbReference type="Rhea" id="RHEA:15889"/>
        <dbReference type="ChEBI" id="CHEBI:15377"/>
        <dbReference type="ChEBI" id="CHEBI:28938"/>
        <dbReference type="ChEBI" id="CHEBI:29985"/>
        <dbReference type="ChEBI" id="CHEBI:58359"/>
    </reaction>
</comment>
<comment type="catalytic activity">
    <reaction evidence="1">
        <text>UTP + NH4(+) + ATP = CTP + ADP + phosphate + 2 H(+)</text>
        <dbReference type="Rhea" id="RHEA:16597"/>
        <dbReference type="ChEBI" id="CHEBI:15378"/>
        <dbReference type="ChEBI" id="CHEBI:28938"/>
        <dbReference type="ChEBI" id="CHEBI:30616"/>
        <dbReference type="ChEBI" id="CHEBI:37563"/>
        <dbReference type="ChEBI" id="CHEBI:43474"/>
        <dbReference type="ChEBI" id="CHEBI:46398"/>
        <dbReference type="ChEBI" id="CHEBI:456216"/>
    </reaction>
</comment>
<comment type="activity regulation">
    <text evidence="1">Allosterically activated by GTP, when glutamine is the substrate; GTP has no effect on the reaction when ammonia is the substrate. The allosteric effector GTP functions by stabilizing the protein conformation that binds the tetrahedral intermediate(s) formed during glutamine hydrolysis. Inhibited by the product CTP, via allosteric rather than competitive inhibition.</text>
</comment>
<comment type="pathway">
    <text evidence="1">Pyrimidine metabolism; CTP biosynthesis via de novo pathway; CTP from UDP: step 2/2.</text>
</comment>
<comment type="subunit">
    <text evidence="1">Homotetramer.</text>
</comment>
<comment type="miscellaneous">
    <text evidence="1">CTPSs have evolved a hybrid strategy for distinguishing between UTP and CTP. The overlapping regions of the product feedback inhibitory and substrate sites recognize a common feature in both compounds, the triphosphate moiety. To differentiate isosteric substrate and product pyrimidine rings, an additional pocket far from the expected kinase/ligase catalytic site, specifically recognizes the cytosine and ribose portions of the product inhibitor.</text>
</comment>
<comment type="similarity">
    <text evidence="1">Belongs to the CTP synthase family.</text>
</comment>
<reference key="1">
    <citation type="journal article" date="2009" name="J. Bacteriol.">
        <title>The genome of Thermosipho africanus TCF52B: lateral genetic connections to the Firmicutes and Archaea.</title>
        <authorList>
            <person name="Nesboe C.L."/>
            <person name="Bapteste E."/>
            <person name="Curtis B."/>
            <person name="Dahle H."/>
            <person name="Lopez P."/>
            <person name="Macleod D."/>
            <person name="Dlutek M."/>
            <person name="Bowman S."/>
            <person name="Zhaxybayeva O."/>
            <person name="Birkeland N.-K."/>
            <person name="Doolittle W.F."/>
        </authorList>
    </citation>
    <scope>NUCLEOTIDE SEQUENCE [LARGE SCALE GENOMIC DNA]</scope>
    <source>
        <strain>TCF52B</strain>
    </source>
</reference>
<gene>
    <name evidence="1" type="primary">pyrG</name>
    <name type="ordered locus">THA_993</name>
</gene>
<keyword id="KW-0067">ATP-binding</keyword>
<keyword id="KW-0315">Glutamine amidotransferase</keyword>
<keyword id="KW-0436">Ligase</keyword>
<keyword id="KW-0460">Magnesium</keyword>
<keyword id="KW-0479">Metal-binding</keyword>
<keyword id="KW-0547">Nucleotide-binding</keyword>
<keyword id="KW-0665">Pyrimidine biosynthesis</keyword>
<keyword id="KW-1185">Reference proteome</keyword>
<accession>B7IH88</accession>